<keyword id="KW-0304">Gas vesicle</keyword>
<keyword id="KW-0677">Repeat</keyword>
<organism>
    <name type="scientific">Dolichospermum flosaquae</name>
    <name type="common">Anabaena flos-aquae</name>
    <dbReference type="NCBI Taxonomy" id="1166"/>
    <lineage>
        <taxon>Bacteria</taxon>
        <taxon>Bacillati</taxon>
        <taxon>Cyanobacteriota</taxon>
        <taxon>Cyanophyceae</taxon>
        <taxon>Nostocales</taxon>
        <taxon>Aphanizomenonaceae</taxon>
        <taxon>Dolichospermum</taxon>
    </lineage>
</organism>
<evidence type="ECO:0000250" key="1">
    <source>
        <dbReference type="UniProtKB" id="P24374"/>
    </source>
</evidence>
<evidence type="ECO:0000303" key="2">
    <source>
    </source>
</evidence>
<evidence type="ECO:0000305" key="3"/>
<evidence type="ECO:0000305" key="4">
    <source>
    </source>
</evidence>
<reference key="1">
    <citation type="journal article" date="1997" name="DNA Seq.">
        <title>Genes encoding proteins homologous to halobacterial Gvps N, J, K, F and L are located downstream of gvpC in the cyanobacterium Anabaena flos-aquae.</title>
        <authorList>
            <person name="Kinsman R."/>
            <person name="Hayes P.K."/>
        </authorList>
    </citation>
    <scope>NUCLEOTIDE SEQUENCE [GENOMIC DNA]</scope>
    <source>
        <strain>CCAP 1403/13f</strain>
    </source>
</reference>
<protein>
    <recommendedName>
        <fullName>Gas vesicle protein J</fullName>
        <shortName>GvpJ</shortName>
    </recommendedName>
</protein>
<accession>P55147</accession>
<proteinExistence type="inferred from homology"/>
<dbReference type="EMBL" id="U17109">
    <property type="protein sequence ID" value="AAA58712.1"/>
    <property type="molecule type" value="Genomic_DNA"/>
</dbReference>
<dbReference type="SMR" id="P55147"/>
<dbReference type="GO" id="GO:0031411">
    <property type="term" value="C:gas vesicle"/>
    <property type="evidence" value="ECO:0007669"/>
    <property type="project" value="UniProtKB-SubCell"/>
</dbReference>
<dbReference type="GO" id="GO:0012506">
    <property type="term" value="C:vesicle membrane"/>
    <property type="evidence" value="ECO:0007669"/>
    <property type="project" value="InterPro"/>
</dbReference>
<dbReference type="GO" id="GO:0005198">
    <property type="term" value="F:structural molecule activity"/>
    <property type="evidence" value="ECO:0007669"/>
    <property type="project" value="InterPro"/>
</dbReference>
<dbReference type="InterPro" id="IPR000638">
    <property type="entry name" value="Gas-vesicle_GvpA-like"/>
</dbReference>
<dbReference type="InterPro" id="IPR050530">
    <property type="entry name" value="GvpA"/>
</dbReference>
<dbReference type="InterPro" id="IPR018493">
    <property type="entry name" value="GvpA-like_CS"/>
</dbReference>
<dbReference type="PANTHER" id="PTHR35344:SF4">
    <property type="entry name" value="GAS VESICLE PROTEIN A1"/>
    <property type="match status" value="1"/>
</dbReference>
<dbReference type="PANTHER" id="PTHR35344">
    <property type="entry name" value="GAS VESICLE STRUCTURAL PROTEIN 2-RELATED"/>
    <property type="match status" value="1"/>
</dbReference>
<dbReference type="Pfam" id="PF00741">
    <property type="entry name" value="Gas_vesicle"/>
    <property type="match status" value="1"/>
</dbReference>
<dbReference type="PROSITE" id="PS00234">
    <property type="entry name" value="GAS_VESICLE_A_1"/>
    <property type="match status" value="1"/>
</dbReference>
<name>GVPJ_DOLFA</name>
<comment type="function">
    <text evidence="1 4">A minor component of the gas vesicle, might be involved in nucleating gas vesicle formation (By similarity). Gas vesicles (GV) are hollow, gas filled proteinaceous nanostructures. During planktonic growth they allow positioning of the organism at a favorable depth for light or nutrient acquisition (Probable).</text>
</comment>
<comment type="subunit">
    <text evidence="1">Interacts with GvpA.</text>
</comment>
<comment type="subcellular location">
    <subcellularLocation>
        <location evidence="1">Gas vesicle</location>
    </subcellularLocation>
</comment>
<comment type="similarity">
    <text evidence="3">Belongs to the gas vesicle GvpA family.</text>
</comment>
<gene>
    <name evidence="2" type="primary">gvpJ</name>
</gene>
<feature type="chain" id="PRO_0000199996" description="Gas vesicle protein J">
    <location>
        <begin position="1"/>
        <end position="248"/>
    </location>
</feature>
<feature type="repeat" description="1; truncated">
    <location>
        <begin position="121"/>
        <end position="140"/>
    </location>
</feature>
<feature type="repeat" description="2">
    <location>
        <begin position="141"/>
        <end position="161"/>
    </location>
</feature>
<feature type="repeat" description="3">
    <location>
        <begin position="162"/>
        <end position="182"/>
    </location>
</feature>
<feature type="repeat" description="4">
    <location>
        <begin position="183"/>
        <end position="203"/>
    </location>
</feature>
<feature type="repeat" description="5">
    <location>
        <begin position="204"/>
        <end position="224"/>
    </location>
</feature>
<feature type="repeat" description="6">
    <location>
        <begin position="225"/>
        <end position="245"/>
    </location>
</feature>
<feature type="region of interest" description="6 X 21 AA approximate tandem repeats">
    <location>
        <begin position="121"/>
        <end position="245"/>
    </location>
</feature>
<sequence>MLPTRPQTNSSRTINTSTQGSTLADILERVLDKGIVIAGDISISIASTELVHIRIRLLISSVDKAKEMGINWWESDPYLSTKAQRLVEENQQLQHRLESLEAKLNSLTSSSVKEEIPLAADVKDDLYQTSAKIPSPVDTPIEVLDFQAQSSGGTPPYVNTSMEILDFQAQTSAESSSPVGSTVEILDFQAQTSEESSSPVVSTVEILDFQAQTSEESSSPVGSTVEILDFQAQTSEEIPSSVDPAIDV</sequence>